<accession>P91754</accession>
<sequence>EVTALVVDNGSGMCKAGFAGDDAPRAVFPSIVGRPRHQGVMVGMGQKDSYVGDEAQSKRGILTLKYPIEHGIVTNWDDMEKIWHHTFYNELRVAPEEHPVLLTEAPLNPKANREKMTQIMFETFNSPAMYVAIQAVLSLYASGRTTGIVLDSGDGVTHTVPIYEGYALPHAILRLDLAGRDLTDYLMKILTERGYSFTTTAEREIVRDIKEKLCYVALDFDQEMGTAASSSSLEKSYELPDGQVITIGNERFRCPESMFQPAFLGMESAGIHETTFNSIMKCDVDIRKDLYANTVMSGGTTMFPGIADRMQKEITSMAPSGMKIKIIAPPERKYSVWIGGSILASLSTFQQMWISKQEYDESGPSIVHRKCF</sequence>
<proteinExistence type="evidence at transcript level"/>
<name>ACT_LUMRU</name>
<protein>
    <recommendedName>
        <fullName>Actin</fullName>
        <ecNumber evidence="1">3.6.4.-</ecNumber>
    </recommendedName>
</protein>
<evidence type="ECO:0000250" key="1">
    <source>
        <dbReference type="UniProtKB" id="P68137"/>
    </source>
</evidence>
<evidence type="ECO:0000305" key="2"/>
<keyword id="KW-0067">ATP-binding</keyword>
<keyword id="KW-0963">Cytoplasm</keyword>
<keyword id="KW-0206">Cytoskeleton</keyword>
<keyword id="KW-0378">Hydrolase</keyword>
<keyword id="KW-0547">Nucleotide-binding</keyword>
<dbReference type="EC" id="3.6.4.-" evidence="1"/>
<dbReference type="EMBL" id="Y09623">
    <property type="protein sequence ID" value="CAA70836.1"/>
    <property type="molecule type" value="mRNA"/>
</dbReference>
<dbReference type="SMR" id="P91754"/>
<dbReference type="GO" id="GO:0005737">
    <property type="term" value="C:cytoplasm"/>
    <property type="evidence" value="ECO:0007669"/>
    <property type="project" value="UniProtKB-KW"/>
</dbReference>
<dbReference type="GO" id="GO:0005856">
    <property type="term" value="C:cytoskeleton"/>
    <property type="evidence" value="ECO:0007669"/>
    <property type="project" value="UniProtKB-SubCell"/>
</dbReference>
<dbReference type="GO" id="GO:0005524">
    <property type="term" value="F:ATP binding"/>
    <property type="evidence" value="ECO:0007669"/>
    <property type="project" value="UniProtKB-KW"/>
</dbReference>
<dbReference type="GO" id="GO:0016787">
    <property type="term" value="F:hydrolase activity"/>
    <property type="evidence" value="ECO:0007669"/>
    <property type="project" value="UniProtKB-KW"/>
</dbReference>
<dbReference type="CDD" id="cd10224">
    <property type="entry name" value="ASKHA_NBD_actin"/>
    <property type="match status" value="1"/>
</dbReference>
<dbReference type="FunFam" id="3.30.420.40:FF:000131">
    <property type="entry name" value="Actin, alpha skeletal muscle"/>
    <property type="match status" value="1"/>
</dbReference>
<dbReference type="FunFam" id="3.30.420.40:FF:000291">
    <property type="entry name" value="Actin, alpha skeletal muscle"/>
    <property type="match status" value="1"/>
</dbReference>
<dbReference type="FunFam" id="3.90.640.10:FF:000047">
    <property type="entry name" value="Actin, alpha skeletal muscle"/>
    <property type="match status" value="1"/>
</dbReference>
<dbReference type="FunFam" id="3.30.420.40:FF:000058">
    <property type="entry name" value="Putative actin-related protein 5"/>
    <property type="match status" value="1"/>
</dbReference>
<dbReference type="Gene3D" id="3.30.420.40">
    <property type="match status" value="2"/>
</dbReference>
<dbReference type="Gene3D" id="3.90.640.10">
    <property type="entry name" value="Actin, Chain A, domain 4"/>
    <property type="match status" value="1"/>
</dbReference>
<dbReference type="InterPro" id="IPR004000">
    <property type="entry name" value="Actin"/>
</dbReference>
<dbReference type="InterPro" id="IPR020902">
    <property type="entry name" value="Actin/actin-like_CS"/>
</dbReference>
<dbReference type="InterPro" id="IPR004001">
    <property type="entry name" value="Actin_CS"/>
</dbReference>
<dbReference type="InterPro" id="IPR043129">
    <property type="entry name" value="ATPase_NBD"/>
</dbReference>
<dbReference type="PANTHER" id="PTHR11937">
    <property type="entry name" value="ACTIN"/>
    <property type="match status" value="1"/>
</dbReference>
<dbReference type="Pfam" id="PF00022">
    <property type="entry name" value="Actin"/>
    <property type="match status" value="1"/>
</dbReference>
<dbReference type="PRINTS" id="PR00190">
    <property type="entry name" value="ACTIN"/>
</dbReference>
<dbReference type="SMART" id="SM00268">
    <property type="entry name" value="ACTIN"/>
    <property type="match status" value="1"/>
</dbReference>
<dbReference type="SUPFAM" id="SSF53067">
    <property type="entry name" value="Actin-like ATPase domain"/>
    <property type="match status" value="2"/>
</dbReference>
<dbReference type="PROSITE" id="PS00406">
    <property type="entry name" value="ACTINS_1"/>
    <property type="match status" value="1"/>
</dbReference>
<dbReference type="PROSITE" id="PS00432">
    <property type="entry name" value="ACTINS_2"/>
    <property type="match status" value="1"/>
</dbReference>
<dbReference type="PROSITE" id="PS01132">
    <property type="entry name" value="ACTINS_ACT_LIKE"/>
    <property type="match status" value="1"/>
</dbReference>
<feature type="chain" id="PRO_0000088953" description="Actin">
    <location>
        <begin position="1" status="less than"/>
        <end position="372"/>
    </location>
</feature>
<feature type="non-terminal residue">
    <location>
        <position position="1"/>
    </location>
</feature>
<reference key="1">
    <citation type="submission" date="1996-11" db="EMBL/GenBank/DDBJ databases">
        <authorList>
            <person name="Stuerzenbaum S.R."/>
            <person name="Morgan A.J."/>
            <person name="Kille P."/>
        </authorList>
    </citation>
    <scope>NUCLEOTIDE SEQUENCE [MRNA]</scope>
</reference>
<organism>
    <name type="scientific">Lumbricus rubellus</name>
    <name type="common">Humus earthworm</name>
    <dbReference type="NCBI Taxonomy" id="35632"/>
    <lineage>
        <taxon>Eukaryota</taxon>
        <taxon>Metazoa</taxon>
        <taxon>Spiralia</taxon>
        <taxon>Lophotrochozoa</taxon>
        <taxon>Annelida</taxon>
        <taxon>Clitellata</taxon>
        <taxon>Oligochaeta</taxon>
        <taxon>Crassiclitellata</taxon>
        <taxon>Lumbricina</taxon>
        <taxon>Lumbricidae</taxon>
        <taxon>Lumbricinae</taxon>
        <taxon>Lumbricus</taxon>
    </lineage>
</organism>
<comment type="function">
    <text>Actins are highly conserved proteins that are involved in various types of cell motility and are ubiquitously expressed in all eukaryotic cells.</text>
</comment>
<comment type="catalytic activity">
    <reaction evidence="1">
        <text>ATP + H2O = ADP + phosphate + H(+)</text>
        <dbReference type="Rhea" id="RHEA:13065"/>
        <dbReference type="ChEBI" id="CHEBI:15377"/>
        <dbReference type="ChEBI" id="CHEBI:15378"/>
        <dbReference type="ChEBI" id="CHEBI:30616"/>
        <dbReference type="ChEBI" id="CHEBI:43474"/>
        <dbReference type="ChEBI" id="CHEBI:456216"/>
    </reaction>
</comment>
<comment type="subcellular location">
    <subcellularLocation>
        <location>Cytoplasm</location>
        <location>Cytoskeleton</location>
    </subcellularLocation>
</comment>
<comment type="similarity">
    <text evidence="2">Belongs to the actin family.</text>
</comment>